<dbReference type="EMBL" id="AK047320">
    <property type="protein sequence ID" value="BAC33022.1"/>
    <property type="status" value="ALT_INIT"/>
    <property type="molecule type" value="mRNA"/>
</dbReference>
<dbReference type="EMBL" id="AK047327">
    <property type="protein sequence ID" value="BAC33025.1"/>
    <property type="status" value="ALT_INIT"/>
    <property type="molecule type" value="mRNA"/>
</dbReference>
<dbReference type="EMBL" id="AC122537">
    <property type="status" value="NOT_ANNOTATED_CDS"/>
    <property type="molecule type" value="Genomic_DNA"/>
</dbReference>
<dbReference type="EMBL" id="AF285112">
    <property type="protein sequence ID" value="AAK82984.1"/>
    <property type="status" value="ALT_INIT"/>
    <property type="molecule type" value="mRNA"/>
</dbReference>
<dbReference type="EMBL" id="BC025889">
    <property type="protein sequence ID" value="AAH25889.1"/>
    <property type="status" value="ALT_INIT"/>
    <property type="molecule type" value="mRNA"/>
</dbReference>
<dbReference type="EMBL" id="BC072576">
    <property type="protein sequence ID" value="AAH72576.2"/>
    <property type="status" value="ALT_INIT"/>
    <property type="molecule type" value="mRNA"/>
</dbReference>
<dbReference type="CCDS" id="CCDS40139.2"/>
<dbReference type="RefSeq" id="NP_653105.3">
    <property type="nucleotide sequence ID" value="NM_144522.5"/>
</dbReference>
<dbReference type="SMR" id="Q8BHL3"/>
<dbReference type="BioGRID" id="212858">
    <property type="interactions" value="7"/>
</dbReference>
<dbReference type="FunCoup" id="Q8BHL3">
    <property type="interactions" value="804"/>
</dbReference>
<dbReference type="IntAct" id="Q8BHL3">
    <property type="interactions" value="2"/>
</dbReference>
<dbReference type="MINT" id="Q8BHL3"/>
<dbReference type="STRING" id="10090.ENSMUSP00000113307"/>
<dbReference type="GlyGen" id="Q8BHL3">
    <property type="glycosylation" value="8 sites, 1 O-linked glycan (6 sites)"/>
</dbReference>
<dbReference type="iPTMnet" id="Q8BHL3"/>
<dbReference type="PhosphoSitePlus" id="Q8BHL3"/>
<dbReference type="SwissPalm" id="Q8BHL3"/>
<dbReference type="jPOST" id="Q8BHL3"/>
<dbReference type="PaxDb" id="10090-ENSMUSP00000113307"/>
<dbReference type="PeptideAtlas" id="Q8BHL3"/>
<dbReference type="ProteomicsDB" id="254855"/>
<dbReference type="Pumba" id="Q8BHL3"/>
<dbReference type="Antibodypedia" id="27194">
    <property type="antibodies" value="104 antibodies from 21 providers"/>
</dbReference>
<dbReference type="DNASU" id="68449"/>
<dbReference type="Ensembl" id="ENSMUST00000120705.3">
    <property type="protein sequence ID" value="ENSMUSP00000113307.2"/>
    <property type="gene ID" value="ENSMUSG00000042492.13"/>
</dbReference>
<dbReference type="GeneID" id="68449"/>
<dbReference type="KEGG" id="mmu:68449"/>
<dbReference type="UCSC" id="uc009juo.3">
    <property type="organism name" value="mouse"/>
</dbReference>
<dbReference type="AGR" id="MGI:1915699"/>
<dbReference type="CTD" id="26000"/>
<dbReference type="MGI" id="MGI:1915699">
    <property type="gene designation" value="Tbc1d10b"/>
</dbReference>
<dbReference type="VEuPathDB" id="HostDB:ENSMUSG00000042492"/>
<dbReference type="eggNOG" id="KOG2221">
    <property type="taxonomic scope" value="Eukaryota"/>
</dbReference>
<dbReference type="GeneTree" id="ENSGT00940000159805"/>
<dbReference type="HOGENOM" id="CLU_005350_8_0_1"/>
<dbReference type="InParanoid" id="Q8BHL3"/>
<dbReference type="OMA" id="AIHEERH"/>
<dbReference type="OrthoDB" id="159449at2759"/>
<dbReference type="PhylomeDB" id="Q8BHL3"/>
<dbReference type="TreeFam" id="TF313293"/>
<dbReference type="Reactome" id="R-MMU-8854214">
    <property type="pathway name" value="TBC/RABGAPs"/>
</dbReference>
<dbReference type="BioGRID-ORCS" id="68449">
    <property type="hits" value="12 hits in 79 CRISPR screens"/>
</dbReference>
<dbReference type="CD-CODE" id="CE726F99">
    <property type="entry name" value="Postsynaptic density"/>
</dbReference>
<dbReference type="ChiTaRS" id="Tbc1d10b">
    <property type="organism name" value="mouse"/>
</dbReference>
<dbReference type="PRO" id="PR:Q8BHL3"/>
<dbReference type="Proteomes" id="UP000000589">
    <property type="component" value="Chromosome 7"/>
</dbReference>
<dbReference type="RNAct" id="Q8BHL3">
    <property type="molecule type" value="protein"/>
</dbReference>
<dbReference type="Bgee" id="ENSMUSG00000042492">
    <property type="expression patterns" value="Expressed in granulocyte and 255 other cell types or tissues"/>
</dbReference>
<dbReference type="ExpressionAtlas" id="Q8BHL3">
    <property type="expression patterns" value="baseline and differential"/>
</dbReference>
<dbReference type="GO" id="GO:0005829">
    <property type="term" value="C:cytosol"/>
    <property type="evidence" value="ECO:0007669"/>
    <property type="project" value="GOC"/>
</dbReference>
<dbReference type="GO" id="GO:0005886">
    <property type="term" value="C:plasma membrane"/>
    <property type="evidence" value="ECO:0007669"/>
    <property type="project" value="Ensembl"/>
</dbReference>
<dbReference type="GO" id="GO:0005096">
    <property type="term" value="F:GTPase activator activity"/>
    <property type="evidence" value="ECO:0000250"/>
    <property type="project" value="UniProtKB"/>
</dbReference>
<dbReference type="GO" id="GO:0043087">
    <property type="term" value="P:regulation of GTPase activity"/>
    <property type="evidence" value="ECO:0000250"/>
    <property type="project" value="UniProtKB"/>
</dbReference>
<dbReference type="GO" id="GO:0042147">
    <property type="term" value="P:retrograde transport, endosome to Golgi"/>
    <property type="evidence" value="ECO:0007669"/>
    <property type="project" value="Ensembl"/>
</dbReference>
<dbReference type="FunFam" id="1.10.10.750:FF:000001">
    <property type="entry name" value="TBC1 domain family member 10A"/>
    <property type="match status" value="1"/>
</dbReference>
<dbReference type="FunFam" id="1.10.472.80:FF:000008">
    <property type="entry name" value="TBC1 domain family member 10A"/>
    <property type="match status" value="1"/>
</dbReference>
<dbReference type="FunFam" id="1.10.8.270:FF:000007">
    <property type="entry name" value="TBC1 domain family member 10A"/>
    <property type="match status" value="1"/>
</dbReference>
<dbReference type="Gene3D" id="1.10.8.270">
    <property type="entry name" value="putative rabgap domain of human tbc1 domain family member 14 like domains"/>
    <property type="match status" value="1"/>
</dbReference>
<dbReference type="Gene3D" id="1.10.10.750">
    <property type="entry name" value="Ypt/Rab-GAP domain of gyp1p, domain 1"/>
    <property type="match status" value="1"/>
</dbReference>
<dbReference type="Gene3D" id="1.10.472.80">
    <property type="entry name" value="Ypt/Rab-GAP domain of gyp1p, domain 3"/>
    <property type="match status" value="1"/>
</dbReference>
<dbReference type="InterPro" id="IPR000195">
    <property type="entry name" value="Rab-GAP-TBC_dom"/>
</dbReference>
<dbReference type="InterPro" id="IPR035969">
    <property type="entry name" value="Rab-GAP_TBC_sf"/>
</dbReference>
<dbReference type="InterPro" id="IPR050302">
    <property type="entry name" value="Rab_GAP_TBC_domain"/>
</dbReference>
<dbReference type="PANTHER" id="PTHR47219">
    <property type="entry name" value="RAB GTPASE-ACTIVATING PROTEIN 1-LIKE"/>
    <property type="match status" value="1"/>
</dbReference>
<dbReference type="PANTHER" id="PTHR47219:SF17">
    <property type="entry name" value="TBC1 DOMAIN FAMILY MEMBER 10B"/>
    <property type="match status" value="1"/>
</dbReference>
<dbReference type="Pfam" id="PF00566">
    <property type="entry name" value="RabGAP-TBC"/>
    <property type="match status" value="1"/>
</dbReference>
<dbReference type="SMART" id="SM00164">
    <property type="entry name" value="TBC"/>
    <property type="match status" value="1"/>
</dbReference>
<dbReference type="SUPFAM" id="SSF47923">
    <property type="entry name" value="Ypt/Rab-GAP domain of gyp1p"/>
    <property type="match status" value="2"/>
</dbReference>
<dbReference type="PROSITE" id="PS50086">
    <property type="entry name" value="TBC_RABGAP"/>
    <property type="match status" value="1"/>
</dbReference>
<feature type="chain" id="PRO_0000315717" description="TBC1 domain family member 10B">
    <location>
        <begin position="1"/>
        <end position="798"/>
    </location>
</feature>
<feature type="domain" description="Rab-GAP TBC" evidence="4">
    <location>
        <begin position="346"/>
        <end position="534"/>
    </location>
</feature>
<feature type="region of interest" description="Disordered" evidence="5">
    <location>
        <begin position="1"/>
        <end position="79"/>
    </location>
</feature>
<feature type="region of interest" description="Disordered" evidence="5">
    <location>
        <begin position="118"/>
        <end position="211"/>
    </location>
</feature>
<feature type="region of interest" description="Disordered" evidence="5">
    <location>
        <begin position="225"/>
        <end position="250"/>
    </location>
</feature>
<feature type="region of interest" description="Disordered" evidence="5">
    <location>
        <begin position="618"/>
        <end position="798"/>
    </location>
</feature>
<feature type="coiled-coil region" evidence="3">
    <location>
        <begin position="702"/>
        <end position="769"/>
    </location>
</feature>
<feature type="compositionally biased region" description="Low complexity" evidence="5">
    <location>
        <begin position="66"/>
        <end position="79"/>
    </location>
</feature>
<feature type="compositionally biased region" description="Low complexity" evidence="5">
    <location>
        <begin position="136"/>
        <end position="161"/>
    </location>
</feature>
<feature type="compositionally biased region" description="Low complexity" evidence="5">
    <location>
        <begin position="641"/>
        <end position="662"/>
    </location>
</feature>
<feature type="compositionally biased region" description="Polar residues" evidence="5">
    <location>
        <begin position="693"/>
        <end position="702"/>
    </location>
</feature>
<feature type="compositionally biased region" description="Basic and acidic residues" evidence="5">
    <location>
        <begin position="705"/>
        <end position="764"/>
    </location>
</feature>
<feature type="compositionally biased region" description="Basic and acidic residues" evidence="5">
    <location>
        <begin position="783"/>
        <end position="798"/>
    </location>
</feature>
<feature type="modified residue" description="Phosphoserine" evidence="2">
    <location>
        <position position="22"/>
    </location>
</feature>
<feature type="modified residue" description="Phosphoserine" evidence="8">
    <location>
        <position position="129"/>
    </location>
</feature>
<feature type="modified residue" description="Phosphothreonine" evidence="8">
    <location>
        <position position="136"/>
    </location>
</feature>
<feature type="modified residue" description="Omega-N-methylarginine" evidence="9">
    <location>
        <position position="170"/>
    </location>
</feature>
<feature type="modified residue" description="Phosphoserine" evidence="2">
    <location>
        <position position="644"/>
    </location>
</feature>
<feature type="modified residue" description="Phosphoserine" evidence="8">
    <location>
        <position position="647"/>
    </location>
</feature>
<feature type="modified residue" description="Phosphoserine" evidence="8">
    <location>
        <position position="650"/>
    </location>
</feature>
<feature type="modified residue" description="Phosphoserine" evidence="7">
    <location>
        <position position="664"/>
    </location>
</feature>
<feature type="modified residue" description="Phosphoserine" evidence="7 8">
    <location>
        <position position="673"/>
    </location>
</feature>
<feature type="sequence conflict" description="In Ref. 1; BAC33022/BAC33025." evidence="6" ref="1">
    <original>G</original>
    <variation>R</variation>
    <location>
        <position position="31"/>
    </location>
</feature>
<feature type="sequence conflict" description="In Ref. 3; AAK82984." evidence="6" ref="3">
    <original>P</original>
    <variation>S</variation>
    <location>
        <position position="221"/>
    </location>
</feature>
<feature type="sequence conflict" description="In Ref. 3; AAK82984." evidence="6" ref="3">
    <original>N</original>
    <variation>S</variation>
    <location>
        <position position="697"/>
    </location>
</feature>
<feature type="sequence conflict" description="In Ref. 3; AAK82984." evidence="6" ref="3">
    <original>Q</original>
    <variation>R</variation>
    <location>
        <position position="751"/>
    </location>
</feature>
<reference key="1">
    <citation type="journal article" date="2005" name="Science">
        <title>The transcriptional landscape of the mammalian genome.</title>
        <authorList>
            <person name="Carninci P."/>
            <person name="Kasukawa T."/>
            <person name="Katayama S."/>
            <person name="Gough J."/>
            <person name="Frith M.C."/>
            <person name="Maeda N."/>
            <person name="Oyama R."/>
            <person name="Ravasi T."/>
            <person name="Lenhard B."/>
            <person name="Wells C."/>
            <person name="Kodzius R."/>
            <person name="Shimokawa K."/>
            <person name="Bajic V.B."/>
            <person name="Brenner S.E."/>
            <person name="Batalov S."/>
            <person name="Forrest A.R."/>
            <person name="Zavolan M."/>
            <person name="Davis M.J."/>
            <person name="Wilming L.G."/>
            <person name="Aidinis V."/>
            <person name="Allen J.E."/>
            <person name="Ambesi-Impiombato A."/>
            <person name="Apweiler R."/>
            <person name="Aturaliya R.N."/>
            <person name="Bailey T.L."/>
            <person name="Bansal M."/>
            <person name="Baxter L."/>
            <person name="Beisel K.W."/>
            <person name="Bersano T."/>
            <person name="Bono H."/>
            <person name="Chalk A.M."/>
            <person name="Chiu K.P."/>
            <person name="Choudhary V."/>
            <person name="Christoffels A."/>
            <person name="Clutterbuck D.R."/>
            <person name="Crowe M.L."/>
            <person name="Dalla E."/>
            <person name="Dalrymple B.P."/>
            <person name="de Bono B."/>
            <person name="Della Gatta G."/>
            <person name="di Bernardo D."/>
            <person name="Down T."/>
            <person name="Engstrom P."/>
            <person name="Fagiolini M."/>
            <person name="Faulkner G."/>
            <person name="Fletcher C.F."/>
            <person name="Fukushima T."/>
            <person name="Furuno M."/>
            <person name="Futaki S."/>
            <person name="Gariboldi M."/>
            <person name="Georgii-Hemming P."/>
            <person name="Gingeras T.R."/>
            <person name="Gojobori T."/>
            <person name="Green R.E."/>
            <person name="Gustincich S."/>
            <person name="Harbers M."/>
            <person name="Hayashi Y."/>
            <person name="Hensch T.K."/>
            <person name="Hirokawa N."/>
            <person name="Hill D."/>
            <person name="Huminiecki L."/>
            <person name="Iacono M."/>
            <person name="Ikeo K."/>
            <person name="Iwama A."/>
            <person name="Ishikawa T."/>
            <person name="Jakt M."/>
            <person name="Kanapin A."/>
            <person name="Katoh M."/>
            <person name="Kawasawa Y."/>
            <person name="Kelso J."/>
            <person name="Kitamura H."/>
            <person name="Kitano H."/>
            <person name="Kollias G."/>
            <person name="Krishnan S.P."/>
            <person name="Kruger A."/>
            <person name="Kummerfeld S.K."/>
            <person name="Kurochkin I.V."/>
            <person name="Lareau L.F."/>
            <person name="Lazarevic D."/>
            <person name="Lipovich L."/>
            <person name="Liu J."/>
            <person name="Liuni S."/>
            <person name="McWilliam S."/>
            <person name="Madan Babu M."/>
            <person name="Madera M."/>
            <person name="Marchionni L."/>
            <person name="Matsuda H."/>
            <person name="Matsuzawa S."/>
            <person name="Miki H."/>
            <person name="Mignone F."/>
            <person name="Miyake S."/>
            <person name="Morris K."/>
            <person name="Mottagui-Tabar S."/>
            <person name="Mulder N."/>
            <person name="Nakano N."/>
            <person name="Nakauchi H."/>
            <person name="Ng P."/>
            <person name="Nilsson R."/>
            <person name="Nishiguchi S."/>
            <person name="Nishikawa S."/>
            <person name="Nori F."/>
            <person name="Ohara O."/>
            <person name="Okazaki Y."/>
            <person name="Orlando V."/>
            <person name="Pang K.C."/>
            <person name="Pavan W.J."/>
            <person name="Pavesi G."/>
            <person name="Pesole G."/>
            <person name="Petrovsky N."/>
            <person name="Piazza S."/>
            <person name="Reed J."/>
            <person name="Reid J.F."/>
            <person name="Ring B.Z."/>
            <person name="Ringwald M."/>
            <person name="Rost B."/>
            <person name="Ruan Y."/>
            <person name="Salzberg S.L."/>
            <person name="Sandelin A."/>
            <person name="Schneider C."/>
            <person name="Schoenbach C."/>
            <person name="Sekiguchi K."/>
            <person name="Semple C.A."/>
            <person name="Seno S."/>
            <person name="Sessa L."/>
            <person name="Sheng Y."/>
            <person name="Shibata Y."/>
            <person name="Shimada H."/>
            <person name="Shimada K."/>
            <person name="Silva D."/>
            <person name="Sinclair B."/>
            <person name="Sperling S."/>
            <person name="Stupka E."/>
            <person name="Sugiura K."/>
            <person name="Sultana R."/>
            <person name="Takenaka Y."/>
            <person name="Taki K."/>
            <person name="Tammoja K."/>
            <person name="Tan S.L."/>
            <person name="Tang S."/>
            <person name="Taylor M.S."/>
            <person name="Tegner J."/>
            <person name="Teichmann S.A."/>
            <person name="Ueda H.R."/>
            <person name="van Nimwegen E."/>
            <person name="Verardo R."/>
            <person name="Wei C.L."/>
            <person name="Yagi K."/>
            <person name="Yamanishi H."/>
            <person name="Zabarovsky E."/>
            <person name="Zhu S."/>
            <person name="Zimmer A."/>
            <person name="Hide W."/>
            <person name="Bult C."/>
            <person name="Grimmond S.M."/>
            <person name="Teasdale R.D."/>
            <person name="Liu E.T."/>
            <person name="Brusic V."/>
            <person name="Quackenbush J."/>
            <person name="Wahlestedt C."/>
            <person name="Mattick J.S."/>
            <person name="Hume D.A."/>
            <person name="Kai C."/>
            <person name="Sasaki D."/>
            <person name="Tomaru Y."/>
            <person name="Fukuda S."/>
            <person name="Kanamori-Katayama M."/>
            <person name="Suzuki M."/>
            <person name="Aoki J."/>
            <person name="Arakawa T."/>
            <person name="Iida J."/>
            <person name="Imamura K."/>
            <person name="Itoh M."/>
            <person name="Kato T."/>
            <person name="Kawaji H."/>
            <person name="Kawagashira N."/>
            <person name="Kawashima T."/>
            <person name="Kojima M."/>
            <person name="Kondo S."/>
            <person name="Konno H."/>
            <person name="Nakano K."/>
            <person name="Ninomiya N."/>
            <person name="Nishio T."/>
            <person name="Okada M."/>
            <person name="Plessy C."/>
            <person name="Shibata K."/>
            <person name="Shiraki T."/>
            <person name="Suzuki S."/>
            <person name="Tagami M."/>
            <person name="Waki K."/>
            <person name="Watahiki A."/>
            <person name="Okamura-Oho Y."/>
            <person name="Suzuki H."/>
            <person name="Kawai J."/>
            <person name="Hayashizaki Y."/>
        </authorList>
    </citation>
    <scope>NUCLEOTIDE SEQUENCE [LARGE SCALE MRNA]</scope>
    <source>
        <strain>C57BL/6J</strain>
        <tissue>Cerebellum</tissue>
    </source>
</reference>
<reference key="2">
    <citation type="journal article" date="2009" name="PLoS Biol.">
        <title>Lineage-specific biology revealed by a finished genome assembly of the mouse.</title>
        <authorList>
            <person name="Church D.M."/>
            <person name="Goodstadt L."/>
            <person name="Hillier L.W."/>
            <person name="Zody M.C."/>
            <person name="Goldstein S."/>
            <person name="She X."/>
            <person name="Bult C.J."/>
            <person name="Agarwala R."/>
            <person name="Cherry J.L."/>
            <person name="DiCuccio M."/>
            <person name="Hlavina W."/>
            <person name="Kapustin Y."/>
            <person name="Meric P."/>
            <person name="Maglott D."/>
            <person name="Birtle Z."/>
            <person name="Marques A.C."/>
            <person name="Graves T."/>
            <person name="Zhou S."/>
            <person name="Teague B."/>
            <person name="Potamousis K."/>
            <person name="Churas C."/>
            <person name="Place M."/>
            <person name="Herschleb J."/>
            <person name="Runnheim R."/>
            <person name="Forrest D."/>
            <person name="Amos-Landgraf J."/>
            <person name="Schwartz D.C."/>
            <person name="Cheng Z."/>
            <person name="Lindblad-Toh K."/>
            <person name="Eichler E.E."/>
            <person name="Ponting C.P."/>
        </authorList>
    </citation>
    <scope>NUCLEOTIDE SEQUENCE [LARGE SCALE GENOMIC DNA]</scope>
    <source>
        <strain>C57BL/6J</strain>
    </source>
</reference>
<reference key="3">
    <citation type="submission" date="2000-07" db="EMBL/GenBank/DDBJ databases">
        <title>Characterization of an unknown wz3-85 gene.</title>
        <authorList>
            <person name="Tian W."/>
            <person name="Chua K."/>
            <person name="Strober W."/>
            <person name="Chu C.C."/>
        </authorList>
    </citation>
    <scope>NUCLEOTIDE SEQUENCE [MRNA] OF 180-798</scope>
    <source>
        <tissue>Spleen</tissue>
    </source>
</reference>
<reference key="4">
    <citation type="journal article" date="2004" name="Genome Res.">
        <title>The status, quality, and expansion of the NIH full-length cDNA project: the Mammalian Gene Collection (MGC).</title>
        <authorList>
            <consortium name="The MGC Project Team"/>
        </authorList>
    </citation>
    <scope>NUCLEOTIDE SEQUENCE [LARGE SCALE MRNA] OF 119-798</scope>
    <source>
        <strain>C57BL/6J</strain>
        <strain>FVB/N</strain>
        <tissue>Kidney</tissue>
    </source>
</reference>
<reference key="5">
    <citation type="journal article" date="2007" name="Mol. Cell. Proteomics">
        <title>Qualitative and quantitative analyses of protein phosphorylation in naive and stimulated mouse synaptosomal preparations.</title>
        <authorList>
            <person name="Munton R.P."/>
            <person name="Tweedie-Cullen R."/>
            <person name="Livingstone-Zatchej M."/>
            <person name="Weinandy F."/>
            <person name="Waidelich M."/>
            <person name="Longo D."/>
            <person name="Gehrig P."/>
            <person name="Potthast F."/>
            <person name="Rutishauser D."/>
            <person name="Gerrits B."/>
            <person name="Panse C."/>
            <person name="Schlapbach R."/>
            <person name="Mansuy I.M."/>
        </authorList>
    </citation>
    <scope>IDENTIFICATION BY MASS SPECTROMETRY [LARGE SCALE ANALYSIS]</scope>
    <source>
        <tissue>Brain cortex</tissue>
    </source>
</reference>
<reference key="6">
    <citation type="journal article" date="2009" name="Immunity">
        <title>The phagosomal proteome in interferon-gamma-activated macrophages.</title>
        <authorList>
            <person name="Trost M."/>
            <person name="English L."/>
            <person name="Lemieux S."/>
            <person name="Courcelles M."/>
            <person name="Desjardins M."/>
            <person name="Thibault P."/>
        </authorList>
    </citation>
    <scope>PHOSPHORYLATION [LARGE SCALE ANALYSIS] AT SER-664 AND SER-673</scope>
    <scope>IDENTIFICATION BY MASS SPECTROMETRY [LARGE SCALE ANALYSIS]</scope>
</reference>
<reference key="7">
    <citation type="journal article" date="2010" name="Cell">
        <title>A tissue-specific atlas of mouse protein phosphorylation and expression.</title>
        <authorList>
            <person name="Huttlin E.L."/>
            <person name="Jedrychowski M.P."/>
            <person name="Elias J.E."/>
            <person name="Goswami T."/>
            <person name="Rad R."/>
            <person name="Beausoleil S.A."/>
            <person name="Villen J."/>
            <person name="Haas W."/>
            <person name="Sowa M.E."/>
            <person name="Gygi S.P."/>
        </authorList>
    </citation>
    <scope>PHOSPHORYLATION [LARGE SCALE ANALYSIS] AT SER-129; THR-136; SER-647; SER-650 AND SER-673</scope>
    <scope>IDENTIFICATION BY MASS SPECTROMETRY [LARGE SCALE ANALYSIS]</scope>
    <source>
        <tissue>Brain</tissue>
        <tissue>Brown adipose tissue</tissue>
        <tissue>Heart</tissue>
        <tissue>Kidney</tissue>
        <tissue>Liver</tissue>
        <tissue>Lung</tissue>
        <tissue>Pancreas</tissue>
        <tissue>Spleen</tissue>
        <tissue>Testis</tissue>
    </source>
</reference>
<reference key="8">
    <citation type="journal article" date="2014" name="Mol. Cell. Proteomics">
        <title>Immunoaffinity enrichment and mass spectrometry analysis of protein methylation.</title>
        <authorList>
            <person name="Guo A."/>
            <person name="Gu H."/>
            <person name="Zhou J."/>
            <person name="Mulhern D."/>
            <person name="Wang Y."/>
            <person name="Lee K.A."/>
            <person name="Yang V."/>
            <person name="Aguiar M."/>
            <person name="Kornhauser J."/>
            <person name="Jia X."/>
            <person name="Ren J."/>
            <person name="Beausoleil S.A."/>
            <person name="Silva J.C."/>
            <person name="Vemulapalli V."/>
            <person name="Bedford M.T."/>
            <person name="Comb M.J."/>
        </authorList>
    </citation>
    <scope>METHYLATION [LARGE SCALE ANALYSIS] AT ARG-170</scope>
    <scope>IDENTIFICATION BY MASS SPECTROMETRY [LARGE SCALE ANALYSIS]</scope>
    <source>
        <tissue>Brain</tissue>
    </source>
</reference>
<accession>Q8BHL3</accession>
<accession>Q6GQW9</accession>
<accession>Q6PIZ5</accession>
<accession>Q91XR3</accession>
<comment type="function">
    <text evidence="2">Acts as a GTPase-activating protein for RAB3A, RAB22A, RAB27A and RAB35. Does not act on RAB2A and RAB6A.</text>
</comment>
<comment type="subcellular location">
    <subcellularLocation>
        <location evidence="1">Cytoplasm</location>
    </subcellularLocation>
</comment>
<comment type="sequence caution" evidence="6">
    <conflict type="erroneous initiation">
        <sequence resource="EMBL-CDS" id="AAH25889"/>
    </conflict>
    <text>Truncated N-terminus.</text>
</comment>
<comment type="sequence caution" evidence="6">
    <conflict type="erroneous initiation">
        <sequence resource="EMBL-CDS" id="AAH72576"/>
    </conflict>
    <text>Truncated N-terminus.</text>
</comment>
<comment type="sequence caution" evidence="6">
    <conflict type="erroneous initiation">
        <sequence resource="EMBL-CDS" id="AAK82984"/>
    </conflict>
    <text>Truncated N-terminus.</text>
</comment>
<comment type="sequence caution" evidence="6">
    <conflict type="erroneous initiation">
        <sequence resource="EMBL-CDS" id="BAC33022"/>
    </conflict>
    <text>Truncated N-terminus.</text>
</comment>
<comment type="sequence caution" evidence="6">
    <conflict type="erroneous initiation">
        <sequence resource="EMBL-CDS" id="BAC33025"/>
    </conflict>
    <text>Truncated N-terminus.</text>
</comment>
<proteinExistence type="evidence at protein level"/>
<name>TB10B_MOUSE</name>
<gene>
    <name type="primary">Tbc1d10b</name>
</gene>
<protein>
    <recommendedName>
        <fullName>TBC1 domain family member 10B</fullName>
    </recommendedName>
    <alternativeName>
        <fullName>Protein wz3-85</fullName>
    </alternativeName>
</protein>
<evidence type="ECO:0000250" key="1"/>
<evidence type="ECO:0000250" key="2">
    <source>
        <dbReference type="UniProtKB" id="Q4KMP7"/>
    </source>
</evidence>
<evidence type="ECO:0000255" key="3"/>
<evidence type="ECO:0000255" key="4">
    <source>
        <dbReference type="PROSITE-ProRule" id="PRU00163"/>
    </source>
</evidence>
<evidence type="ECO:0000256" key="5">
    <source>
        <dbReference type="SAM" id="MobiDB-lite"/>
    </source>
</evidence>
<evidence type="ECO:0000305" key="6"/>
<evidence type="ECO:0007744" key="7">
    <source>
    </source>
</evidence>
<evidence type="ECO:0007744" key="8">
    <source>
    </source>
</evidence>
<evidence type="ECO:0007744" key="9">
    <source>
    </source>
</evidence>
<keyword id="KW-0175">Coiled coil</keyword>
<keyword id="KW-0963">Cytoplasm</keyword>
<keyword id="KW-0343">GTPase activation</keyword>
<keyword id="KW-0488">Methylation</keyword>
<keyword id="KW-0597">Phosphoprotein</keyword>
<keyword id="KW-1185">Reference proteome</keyword>
<organism>
    <name type="scientific">Mus musculus</name>
    <name type="common">Mouse</name>
    <dbReference type="NCBI Taxonomy" id="10090"/>
    <lineage>
        <taxon>Eukaryota</taxon>
        <taxon>Metazoa</taxon>
        <taxon>Chordata</taxon>
        <taxon>Craniata</taxon>
        <taxon>Vertebrata</taxon>
        <taxon>Euteleostomi</taxon>
        <taxon>Mammalia</taxon>
        <taxon>Eutheria</taxon>
        <taxon>Euarchontoglires</taxon>
        <taxon>Glires</taxon>
        <taxon>Rodentia</taxon>
        <taxon>Myomorpha</taxon>
        <taxon>Muroidea</taxon>
        <taxon>Muridae</taxon>
        <taxon>Murinae</taxon>
        <taxon>Mus</taxon>
        <taxon>Mus</taxon>
    </lineage>
</organism>
<sequence length="798" mass="87275">METGPAPLVAPPRRHGAPAAPSPPPRGSRAGSHLVVEPGPPVTTATSAPVELVAPGEARPACVPGSSQTSASTPTTATSSTVVMLTLEASPEAAKTQEFPAPAAETGAETSVALALGTDTQKTEEVRASPVPGPGTPTRTPSRMAPGALTAKPPLAPKPGTTVASGVTARGGVGQVAGGHEAATSASAGSVPEDPSGPVTGPPGTCEAPAPTPVAVVTVTPAPEPVENFQDLGSTSSLGPGISGPRGQAPDTLSYLDSVSLMSGTLESLPDDVSSMGSDSEINGMALRKTDKYGFLGGSQYSGSLESSIPVDVARQRELKWLEMFSNWDKWLSRRFQKVKLRCRKGIPSSLRAKAWQYLSNSKELLEQNPGKFEELERAAGDPKWLDVIEKDLHRQFPFHEMFAARGGHGQQDLYRILKAYTIYRPDEGYCQAQAPVAAVLLMHMPAEQAFWCLVQICDKYLPGYYSAGLEAIQLDGEIFFALLRRVSPLAHRHLRRQRIDPVLYMTEWFMCIFARTLPWASVLRVWDMFFCEGVKIIFRVALVLLRHTLGSVEKLRSCQGMYETMEQLRNLPQQCMQEDFLVHEVTNLPVTEAWIERENAAQLKKWRETRGELQYRPSRRLHGSRAIHEERRRQQPPLGPSSSLLSLPSLKSRGSRAVGGAPSPPPPVRRASAGPVPGAVVIAEGLHPSLPSPTGNSTPLGTSKEIRRQEKERQKQEKDREKERQRQEKERERQEKERQKWEKEQEKEQQKQEKERQKLEKKGQGRKLSLRRRADGPPASHDGGDRSAAEARQDAYF</sequence>